<feature type="chain" id="PRO_0000438592" description="Non-canonical poly(A) RNA polymerase protein Trf4-1">
    <location>
        <begin position="1"/>
        <end position="1001"/>
    </location>
</feature>
<feature type="domain" description="PAP-associated" evidence="2">
    <location>
        <begin position="458"/>
        <end position="517"/>
    </location>
</feature>
<feature type="region of interest" description="Disordered" evidence="3">
    <location>
        <begin position="44"/>
        <end position="92"/>
    </location>
</feature>
<feature type="region of interest" description="Disordered" evidence="3">
    <location>
        <begin position="115"/>
        <end position="238"/>
    </location>
</feature>
<feature type="region of interest" description="Disordered" evidence="3">
    <location>
        <begin position="631"/>
        <end position="652"/>
    </location>
</feature>
<feature type="region of interest" description="Disordered" evidence="3">
    <location>
        <begin position="687"/>
        <end position="740"/>
    </location>
</feature>
<feature type="region of interest" description="Disordered" evidence="3">
    <location>
        <begin position="767"/>
        <end position="963"/>
    </location>
</feature>
<feature type="region of interest" description="Disordered" evidence="3">
    <location>
        <begin position="977"/>
        <end position="1001"/>
    </location>
</feature>
<feature type="compositionally biased region" description="Low complexity" evidence="3">
    <location>
        <begin position="44"/>
        <end position="86"/>
    </location>
</feature>
<feature type="compositionally biased region" description="Low complexity" evidence="3">
    <location>
        <begin position="127"/>
        <end position="163"/>
    </location>
</feature>
<feature type="compositionally biased region" description="Gly residues" evidence="3">
    <location>
        <begin position="164"/>
        <end position="178"/>
    </location>
</feature>
<feature type="compositionally biased region" description="Low complexity" evidence="3">
    <location>
        <begin position="179"/>
        <end position="216"/>
    </location>
</feature>
<feature type="compositionally biased region" description="Basic residues" evidence="3">
    <location>
        <begin position="635"/>
        <end position="649"/>
    </location>
</feature>
<feature type="compositionally biased region" description="Low complexity" evidence="3">
    <location>
        <begin position="687"/>
        <end position="708"/>
    </location>
</feature>
<feature type="compositionally biased region" description="Low complexity" evidence="3">
    <location>
        <begin position="768"/>
        <end position="788"/>
    </location>
</feature>
<feature type="compositionally biased region" description="Gly residues" evidence="3">
    <location>
        <begin position="827"/>
        <end position="841"/>
    </location>
</feature>
<feature type="compositionally biased region" description="Polar residues" evidence="3">
    <location>
        <begin position="844"/>
        <end position="854"/>
    </location>
</feature>
<feature type="compositionally biased region" description="Low complexity" evidence="3">
    <location>
        <begin position="855"/>
        <end position="880"/>
    </location>
</feature>
<feature type="compositionally biased region" description="Basic residues" evidence="3">
    <location>
        <begin position="881"/>
        <end position="912"/>
    </location>
</feature>
<feature type="compositionally biased region" description="Low complexity" evidence="3">
    <location>
        <begin position="932"/>
        <end position="955"/>
    </location>
</feature>
<feature type="compositionally biased region" description="Low complexity" evidence="3">
    <location>
        <begin position="977"/>
        <end position="992"/>
    </location>
</feature>
<feature type="binding site" evidence="1">
    <location>
        <position position="328"/>
    </location>
    <ligand>
        <name>Mn(2+)</name>
        <dbReference type="ChEBI" id="CHEBI:29035"/>
        <note>catalytic</note>
    </ligand>
</feature>
<feature type="binding site" evidence="1">
    <location>
        <position position="330"/>
    </location>
    <ligand>
        <name>Mn(2+)</name>
        <dbReference type="ChEBI" id="CHEBI:29035"/>
        <note>catalytic</note>
    </ligand>
</feature>
<feature type="splice variant" id="VSP_058688" description="In isoform F.">
    <location>
        <begin position="1"/>
        <end position="199"/>
    </location>
</feature>
<feature type="mutagenesis site" description="Loss of activity." evidence="4">
    <original>DID</original>
    <variation>AIA</variation>
    <location>
        <begin position="328"/>
        <end position="330"/>
    </location>
</feature>
<comment type="function">
    <text evidence="4 5">Involved in a post-transcriptional quality control mechanism limiting inappropriate expression of genetic information (PubMed:18765642, PubMed:26786835). Polyadenylation is required for the degradative activity of the exosome on several of its nuclear RNA substrates (PubMed:26786835). Polyadenylates RNA processing and degradation intermediates of snRNAs and mRNAs (PubMed:18765642, PubMed:26786835).</text>
</comment>
<comment type="catalytic activity">
    <reaction evidence="4">
        <text>RNA(n) + ATP = RNA(n)-3'-adenine ribonucleotide + diphosphate</text>
        <dbReference type="Rhea" id="RHEA:11332"/>
        <dbReference type="Rhea" id="RHEA-COMP:14527"/>
        <dbReference type="Rhea" id="RHEA-COMP:17347"/>
        <dbReference type="ChEBI" id="CHEBI:30616"/>
        <dbReference type="ChEBI" id="CHEBI:33019"/>
        <dbReference type="ChEBI" id="CHEBI:140395"/>
        <dbReference type="ChEBI" id="CHEBI:173115"/>
        <dbReference type="EC" id="2.7.7.19"/>
    </reaction>
</comment>
<comment type="cofactor">
    <cofactor evidence="4">
        <name>Mn(2+)</name>
        <dbReference type="ChEBI" id="CHEBI:29035"/>
    </cofactor>
    <text evidence="4">Low activity with Mg(2+).</text>
</comment>
<comment type="subcellular location">
    <subcellularLocation>
        <location evidence="5">Cytoplasm</location>
    </subcellularLocation>
    <text evidence="5">Enriched in 3 to 6 cytoplasmic foci.</text>
</comment>
<comment type="alternative products">
    <event type="alternative initiation"/>
    <isoform>
        <id>Q7KVS9-1</id>
        <name evidence="9">E</name>
        <name evidence="9">C</name>
        <name evidence="9">H</name>
        <name evidence="9">I</name>
        <name evidence="9">J</name>
        <sequence type="displayed"/>
    </isoform>
    <isoform>
        <id>Q7KVS9-2</id>
        <name evidence="9">F</name>
        <name evidence="9">G</name>
        <sequence type="described" ref="VSP_058688"/>
    </isoform>
</comment>
<comment type="developmental stage">
    <text evidence="4">High expression in unfertilized eggs and from 0 to 4 hours in early embryos. Low expression in later developmental stages, with slight increase in 8-16 hour-old embryos and in adults.</text>
</comment>
<comment type="disruption phenotype">
    <text evidence="4">RNAi-mediated knockdown causes lethality at the third-instar larval or early pupal stage.</text>
</comment>
<comment type="similarity">
    <text evidence="7">Belongs to the DNA polymerase type-B-like family.</text>
</comment>
<gene>
    <name evidence="6 9" type="primary">Trf4-1</name>
    <name evidence="9" type="ORF">CG11265</name>
</gene>
<name>TRF41_DROME</name>
<sequence length="1001" mass="108718">MDPFVGWFQKEQEGPSLCTWLKIWETNAQEMGALLNQQLQQATTINGSTSSSSSSSNSGNNNNNNNNNIINNTITNTTNNTGNNSSAKPYLSRPYSSLNRVLNFRADSLEILQQQQQQQQLNGTTQRNSTNINTTSGGSTSSSADSTTNRDNNSPANSSSTNGPGAGTGTSTGAGGTGTNSPATTASSTAATTTGPATSMSDTSNNPPQSTTTPASRTNSIYYNPSRKKRPENKAGGAHYYMNNHMEMIAKYKGEPWRKPDYPYGEGVIGLHEEIEHFYQYVLPTPCEHAIRNEVVKRIEAVVHSIWPQAVVEIFGSFRTGLFLPTSDIDLVVLGLWEKLPLRTLEFELVSRGIAEACTVRVLDKASVPIIKLTDRETQVKVDISFNMQSGVQSAELIKKFKRDYPVLEKLVLVLKQFLLLRDLNEVFTGGISSYSLILMCISFLQMHPRGIYHDTANLGVLLLEFFELYGRRFNYMKIGISIKNGGRYMPKDELQRDMVDGHRPSLLCIEDPLTPGNDIGRSSYGVFQVQQAFKCAYRVLALAVSPLNLLGIDPRVNSILGRIIHITDDVIDYREWIRENFEHLVVVDRISPLPTAAPTAYATANGAPKYVIMPSGAVVQQLYHHPVQVPTAHGHSHAHSHSHGHAHPGAHLCQPYVTGTTVSAVTTTTTMAVVTVGVSAGGVQQQQQQQNATAHTHSQQQTQNQSQSRHRRGSTSSGDDSEDSKDGDVVETTSSAQEVVDIALSTPNGLANMSMPMPVHAVGMPASNSWSGNGNGNGNSSSSTGSSPEIAHIAAQEMDPELEDQQQQQQHQETSGGNGFIRPGDVGTGSNRGGGDGSGGRNYNQRNNHNSSGYYHQQYYVPPPMQQQLSKSNSSSNYHQQHHHSHSHGNHSHRQQHHHQQQHHHQQRPQHLRVGGGNRYQKSLGGSPIISAGNASNSSSNCSNSSSSSGSNNSRLPPLRGTLVNSSSAISIISISSESSIASSSSSSSRSGQDQQRDER</sequence>
<dbReference type="EC" id="2.7.7.19" evidence="4"/>
<dbReference type="EMBL" id="AE014298">
    <property type="protein sequence ID" value="AAF46390.3"/>
    <property type="molecule type" value="Genomic_DNA"/>
</dbReference>
<dbReference type="EMBL" id="AE014298">
    <property type="protein sequence ID" value="AAS65288.2"/>
    <property type="molecule type" value="Genomic_DNA"/>
</dbReference>
<dbReference type="EMBL" id="AE014298">
    <property type="protein sequence ID" value="AAS65289.2"/>
    <property type="molecule type" value="Genomic_DNA"/>
</dbReference>
<dbReference type="EMBL" id="AE014298">
    <property type="protein sequence ID" value="AAS65290.1"/>
    <property type="molecule type" value="Genomic_DNA"/>
</dbReference>
<dbReference type="EMBL" id="AE014298">
    <property type="protein sequence ID" value="ABW09362.1"/>
    <property type="molecule type" value="Genomic_DNA"/>
</dbReference>
<dbReference type="EMBL" id="AE014298">
    <property type="protein sequence ID" value="ABW09363.1"/>
    <property type="molecule type" value="Genomic_DNA"/>
</dbReference>
<dbReference type="EMBL" id="AE014298">
    <property type="protein sequence ID" value="AGB95183.1"/>
    <property type="molecule type" value="Genomic_DNA"/>
</dbReference>
<dbReference type="EMBL" id="BT010282">
    <property type="protein sequence ID" value="AAQ23600.1"/>
    <property type="molecule type" value="mRNA"/>
</dbReference>
<dbReference type="RefSeq" id="NP_001096913.1">
    <molecule id="Q7KVS9-2"/>
    <property type="nucleotide sequence ID" value="NM_001103443.2"/>
</dbReference>
<dbReference type="RefSeq" id="NP_001096914.1">
    <molecule id="Q7KVS9-2"/>
    <property type="nucleotide sequence ID" value="NM_001103444.2"/>
</dbReference>
<dbReference type="RefSeq" id="NP_001259340.1">
    <molecule id="Q7KVS9-1"/>
    <property type="nucleotide sequence ID" value="NM_001272411.1"/>
</dbReference>
<dbReference type="RefSeq" id="NP_572490.2">
    <molecule id="Q7KVS9-1"/>
    <property type="nucleotide sequence ID" value="NM_132262.3"/>
</dbReference>
<dbReference type="RefSeq" id="NP_996381.1">
    <molecule id="Q7KVS9-1"/>
    <property type="nucleotide sequence ID" value="NM_206658.4"/>
</dbReference>
<dbReference type="RefSeq" id="NP_996382.2">
    <molecule id="Q7KVS9-1"/>
    <property type="nucleotide sequence ID" value="NM_206659.3"/>
</dbReference>
<dbReference type="RefSeq" id="NP_996383.2">
    <molecule id="Q7KVS9-1"/>
    <property type="nucleotide sequence ID" value="NM_206660.2"/>
</dbReference>
<dbReference type="SMR" id="Q7KVS9"/>
<dbReference type="FunCoup" id="Q7KVS9">
    <property type="interactions" value="270"/>
</dbReference>
<dbReference type="STRING" id="7227.FBpp0304114"/>
<dbReference type="GlyGen" id="Q7KVS9">
    <property type="glycosylation" value="1 site"/>
</dbReference>
<dbReference type="PaxDb" id="7227-FBpp0071159"/>
<dbReference type="DNASU" id="31795"/>
<dbReference type="EnsemblMetazoa" id="FBtr0071212">
    <molecule id="Q7KVS9-1"/>
    <property type="protein sequence ID" value="FBpp0071158"/>
    <property type="gene ID" value="FBgn0030049"/>
</dbReference>
<dbReference type="EnsemblMetazoa" id="FBtr0071213">
    <molecule id="Q7KVS9-1"/>
    <property type="protein sequence ID" value="FBpp0071159"/>
    <property type="gene ID" value="FBgn0030049"/>
</dbReference>
<dbReference type="EnsemblMetazoa" id="FBtr0112963">
    <molecule id="Q7KVS9-2"/>
    <property type="protein sequence ID" value="FBpp0111876"/>
    <property type="gene ID" value="FBgn0030049"/>
</dbReference>
<dbReference type="EnsemblMetazoa" id="FBtr0112964">
    <molecule id="Q7KVS9-2"/>
    <property type="protein sequence ID" value="FBpp0111877"/>
    <property type="gene ID" value="FBgn0030049"/>
</dbReference>
<dbReference type="EnsemblMetazoa" id="FBtr0331723">
    <molecule id="Q7KVS9-1"/>
    <property type="protein sequence ID" value="FBpp0304112"/>
    <property type="gene ID" value="FBgn0030049"/>
</dbReference>
<dbReference type="EnsemblMetazoa" id="FBtr0331724">
    <molecule id="Q7KVS9-1"/>
    <property type="protein sequence ID" value="FBpp0304113"/>
    <property type="gene ID" value="FBgn0030049"/>
</dbReference>
<dbReference type="EnsemblMetazoa" id="FBtr0331725">
    <molecule id="Q7KVS9-1"/>
    <property type="protein sequence ID" value="FBpp0304114"/>
    <property type="gene ID" value="FBgn0030049"/>
</dbReference>
<dbReference type="GeneID" id="31795"/>
<dbReference type="KEGG" id="dme:Dmel_CG11265"/>
<dbReference type="UCSC" id="CG11265-RC">
    <molecule id="Q7KVS9-1"/>
    <property type="organism name" value="d. melanogaster"/>
</dbReference>
<dbReference type="UCSC" id="CG11265-RF">
    <property type="organism name" value="d. melanogaster"/>
</dbReference>
<dbReference type="AGR" id="FB:FBgn0030049"/>
<dbReference type="CTD" id="31795"/>
<dbReference type="FlyBase" id="FBgn0030049">
    <property type="gene designation" value="Trf4-1"/>
</dbReference>
<dbReference type="VEuPathDB" id="VectorBase:FBgn0030049"/>
<dbReference type="eggNOG" id="KOG1906">
    <property type="taxonomic scope" value="Eukaryota"/>
</dbReference>
<dbReference type="GeneTree" id="ENSGT00940000169468"/>
<dbReference type="InParanoid" id="Q7KVS9"/>
<dbReference type="OMA" id="NRYQKSV"/>
<dbReference type="OrthoDB" id="273917at2759"/>
<dbReference type="PhylomeDB" id="Q7KVS9"/>
<dbReference type="BioGRID-ORCS" id="31795">
    <property type="hits" value="1 hit in 3 CRISPR screens"/>
</dbReference>
<dbReference type="GenomeRNAi" id="31795"/>
<dbReference type="PRO" id="PR:Q7KVS9"/>
<dbReference type="Proteomes" id="UP000000803">
    <property type="component" value="Chromosome X"/>
</dbReference>
<dbReference type="Bgee" id="FBgn0030049">
    <property type="expression patterns" value="Expressed in fat body cell in adult thorax and 258 other cell types or tissues"/>
</dbReference>
<dbReference type="ExpressionAtlas" id="Q7KVS9">
    <property type="expression patterns" value="baseline and differential"/>
</dbReference>
<dbReference type="GO" id="GO:0005737">
    <property type="term" value="C:cytoplasm"/>
    <property type="evidence" value="ECO:0007669"/>
    <property type="project" value="UniProtKB-SubCell"/>
</dbReference>
<dbReference type="GO" id="GO:0005730">
    <property type="term" value="C:nucleolus"/>
    <property type="evidence" value="ECO:0000318"/>
    <property type="project" value="GO_Central"/>
</dbReference>
<dbReference type="GO" id="GO:0031499">
    <property type="term" value="C:TRAMP complex"/>
    <property type="evidence" value="ECO:0000318"/>
    <property type="project" value="GO_Central"/>
</dbReference>
<dbReference type="GO" id="GO:0016853">
    <property type="term" value="F:isomerase activity"/>
    <property type="evidence" value="ECO:0007669"/>
    <property type="project" value="UniProtKB-KW"/>
</dbReference>
<dbReference type="GO" id="GO:0046872">
    <property type="term" value="F:metal ion binding"/>
    <property type="evidence" value="ECO:0007669"/>
    <property type="project" value="UniProtKB-KW"/>
</dbReference>
<dbReference type="GO" id="GO:1990817">
    <property type="term" value="F:poly(A) RNA polymerase activity"/>
    <property type="evidence" value="ECO:0000314"/>
    <property type="project" value="FlyBase"/>
</dbReference>
<dbReference type="GO" id="GO:0006397">
    <property type="term" value="P:mRNA processing"/>
    <property type="evidence" value="ECO:0007669"/>
    <property type="project" value="UniProtKB-KW"/>
</dbReference>
<dbReference type="GO" id="GO:0043634">
    <property type="term" value="P:polyadenylation-dependent ncRNA catabolic process"/>
    <property type="evidence" value="ECO:0000315"/>
    <property type="project" value="FlyBase"/>
</dbReference>
<dbReference type="GO" id="GO:0031123">
    <property type="term" value="P:RNA 3'-end processing"/>
    <property type="evidence" value="ECO:0000318"/>
    <property type="project" value="GO_Central"/>
</dbReference>
<dbReference type="CDD" id="cd05402">
    <property type="entry name" value="NT_PAP_TUTase"/>
    <property type="match status" value="1"/>
</dbReference>
<dbReference type="FunFam" id="3.30.460.10:FF:000006">
    <property type="entry name" value="non-canonical poly(A) RNA polymerase PAPD5"/>
    <property type="match status" value="1"/>
</dbReference>
<dbReference type="FunFam" id="1.10.1410.10:FF:000003">
    <property type="entry name" value="non-canonical poly(A) RNA polymerase PAPD7"/>
    <property type="match status" value="1"/>
</dbReference>
<dbReference type="Gene3D" id="1.10.1410.10">
    <property type="match status" value="1"/>
</dbReference>
<dbReference type="Gene3D" id="3.30.460.10">
    <property type="entry name" value="Beta Polymerase, domain 2"/>
    <property type="match status" value="1"/>
</dbReference>
<dbReference type="InterPro" id="IPR054708">
    <property type="entry name" value="MTPAP-like_central"/>
</dbReference>
<dbReference type="InterPro" id="IPR043519">
    <property type="entry name" value="NT_sf"/>
</dbReference>
<dbReference type="InterPro" id="IPR002058">
    <property type="entry name" value="PAP_assoc"/>
</dbReference>
<dbReference type="InterPro" id="IPR045862">
    <property type="entry name" value="Trf4-like"/>
</dbReference>
<dbReference type="PANTHER" id="PTHR23092:SF15">
    <property type="entry name" value="INACTIVE NON-CANONICAL POLY(A) RNA POLYMERASE PROTEIN TRF4-2-RELATED"/>
    <property type="match status" value="1"/>
</dbReference>
<dbReference type="PANTHER" id="PTHR23092">
    <property type="entry name" value="POLY(A) RNA POLYMERASE"/>
    <property type="match status" value="1"/>
</dbReference>
<dbReference type="Pfam" id="PF22600">
    <property type="entry name" value="MTPAP-like_central"/>
    <property type="match status" value="1"/>
</dbReference>
<dbReference type="Pfam" id="PF03828">
    <property type="entry name" value="PAP_assoc"/>
    <property type="match status" value="1"/>
</dbReference>
<dbReference type="SUPFAM" id="SSF81301">
    <property type="entry name" value="Nucleotidyltransferase"/>
    <property type="match status" value="1"/>
</dbReference>
<dbReference type="SUPFAM" id="SSF81631">
    <property type="entry name" value="PAP/OAS1 substrate-binding domain"/>
    <property type="match status" value="1"/>
</dbReference>
<protein>
    <recommendedName>
        <fullName evidence="7">Non-canonical poly(A) RNA polymerase protein Trf4-1</fullName>
        <ecNumber evidence="4">2.7.7.19</ecNumber>
    </recommendedName>
    <alternativeName>
        <fullName evidence="6">Topoisomerase 1-related protein 4-1</fullName>
    </alternativeName>
</protein>
<evidence type="ECO:0000250" key="1">
    <source>
        <dbReference type="UniProtKB" id="O13833"/>
    </source>
</evidence>
<evidence type="ECO:0000255" key="2"/>
<evidence type="ECO:0000256" key="3">
    <source>
        <dbReference type="SAM" id="MobiDB-lite"/>
    </source>
</evidence>
<evidence type="ECO:0000269" key="4">
    <source>
    </source>
</evidence>
<evidence type="ECO:0000269" key="5">
    <source>
    </source>
</evidence>
<evidence type="ECO:0000303" key="6">
    <source>
    </source>
</evidence>
<evidence type="ECO:0000305" key="7"/>
<evidence type="ECO:0000312" key="8">
    <source>
        <dbReference type="EMBL" id="AAQ23600.1"/>
    </source>
</evidence>
<evidence type="ECO:0000312" key="9">
    <source>
        <dbReference type="FlyBase" id="FBgn0030049"/>
    </source>
</evidence>
<evidence type="ECO:0000312" key="10">
    <source>
        <dbReference type="Proteomes" id="UP000000803"/>
    </source>
</evidence>
<reference evidence="10" key="1">
    <citation type="journal article" date="2000" name="Science">
        <title>The genome sequence of Drosophila melanogaster.</title>
        <authorList>
            <person name="Adams M.D."/>
            <person name="Celniker S.E."/>
            <person name="Holt R.A."/>
            <person name="Evans C.A."/>
            <person name="Gocayne J.D."/>
            <person name="Amanatides P.G."/>
            <person name="Scherer S.E."/>
            <person name="Li P.W."/>
            <person name="Hoskins R.A."/>
            <person name="Galle R.F."/>
            <person name="George R.A."/>
            <person name="Lewis S.E."/>
            <person name="Richards S."/>
            <person name="Ashburner M."/>
            <person name="Henderson S.N."/>
            <person name="Sutton G.G."/>
            <person name="Wortman J.R."/>
            <person name="Yandell M.D."/>
            <person name="Zhang Q."/>
            <person name="Chen L.X."/>
            <person name="Brandon R.C."/>
            <person name="Rogers Y.-H.C."/>
            <person name="Blazej R.G."/>
            <person name="Champe M."/>
            <person name="Pfeiffer B.D."/>
            <person name="Wan K.H."/>
            <person name="Doyle C."/>
            <person name="Baxter E.G."/>
            <person name="Helt G."/>
            <person name="Nelson C.R."/>
            <person name="Miklos G.L.G."/>
            <person name="Abril J.F."/>
            <person name="Agbayani A."/>
            <person name="An H.-J."/>
            <person name="Andrews-Pfannkoch C."/>
            <person name="Baldwin D."/>
            <person name="Ballew R.M."/>
            <person name="Basu A."/>
            <person name="Baxendale J."/>
            <person name="Bayraktaroglu L."/>
            <person name="Beasley E.M."/>
            <person name="Beeson K.Y."/>
            <person name="Benos P.V."/>
            <person name="Berman B.P."/>
            <person name="Bhandari D."/>
            <person name="Bolshakov S."/>
            <person name="Borkova D."/>
            <person name="Botchan M.R."/>
            <person name="Bouck J."/>
            <person name="Brokstein P."/>
            <person name="Brottier P."/>
            <person name="Burtis K.C."/>
            <person name="Busam D.A."/>
            <person name="Butler H."/>
            <person name="Cadieu E."/>
            <person name="Center A."/>
            <person name="Chandra I."/>
            <person name="Cherry J.M."/>
            <person name="Cawley S."/>
            <person name="Dahlke C."/>
            <person name="Davenport L.B."/>
            <person name="Davies P."/>
            <person name="de Pablos B."/>
            <person name="Delcher A."/>
            <person name="Deng Z."/>
            <person name="Mays A.D."/>
            <person name="Dew I."/>
            <person name="Dietz S.M."/>
            <person name="Dodson K."/>
            <person name="Doup L.E."/>
            <person name="Downes M."/>
            <person name="Dugan-Rocha S."/>
            <person name="Dunkov B.C."/>
            <person name="Dunn P."/>
            <person name="Durbin K.J."/>
            <person name="Evangelista C.C."/>
            <person name="Ferraz C."/>
            <person name="Ferriera S."/>
            <person name="Fleischmann W."/>
            <person name="Fosler C."/>
            <person name="Gabrielian A.E."/>
            <person name="Garg N.S."/>
            <person name="Gelbart W.M."/>
            <person name="Glasser K."/>
            <person name="Glodek A."/>
            <person name="Gong F."/>
            <person name="Gorrell J.H."/>
            <person name="Gu Z."/>
            <person name="Guan P."/>
            <person name="Harris M."/>
            <person name="Harris N.L."/>
            <person name="Harvey D.A."/>
            <person name="Heiman T.J."/>
            <person name="Hernandez J.R."/>
            <person name="Houck J."/>
            <person name="Hostin D."/>
            <person name="Houston K.A."/>
            <person name="Howland T.J."/>
            <person name="Wei M.-H."/>
            <person name="Ibegwam C."/>
            <person name="Jalali M."/>
            <person name="Kalush F."/>
            <person name="Karpen G.H."/>
            <person name="Ke Z."/>
            <person name="Kennison J.A."/>
            <person name="Ketchum K.A."/>
            <person name="Kimmel B.E."/>
            <person name="Kodira C.D."/>
            <person name="Kraft C.L."/>
            <person name="Kravitz S."/>
            <person name="Kulp D."/>
            <person name="Lai Z."/>
            <person name="Lasko P."/>
            <person name="Lei Y."/>
            <person name="Levitsky A.A."/>
            <person name="Li J.H."/>
            <person name="Li Z."/>
            <person name="Liang Y."/>
            <person name="Lin X."/>
            <person name="Liu X."/>
            <person name="Mattei B."/>
            <person name="McIntosh T.C."/>
            <person name="McLeod M.P."/>
            <person name="McPherson D."/>
            <person name="Merkulov G."/>
            <person name="Milshina N.V."/>
            <person name="Mobarry C."/>
            <person name="Morris J."/>
            <person name="Moshrefi A."/>
            <person name="Mount S.M."/>
            <person name="Moy M."/>
            <person name="Murphy B."/>
            <person name="Murphy L."/>
            <person name="Muzny D.M."/>
            <person name="Nelson D.L."/>
            <person name="Nelson D.R."/>
            <person name="Nelson K.A."/>
            <person name="Nixon K."/>
            <person name="Nusskern D.R."/>
            <person name="Pacleb J.M."/>
            <person name="Palazzolo M."/>
            <person name="Pittman G.S."/>
            <person name="Pan S."/>
            <person name="Pollard J."/>
            <person name="Puri V."/>
            <person name="Reese M.G."/>
            <person name="Reinert K."/>
            <person name="Remington K."/>
            <person name="Saunders R.D.C."/>
            <person name="Scheeler F."/>
            <person name="Shen H."/>
            <person name="Shue B.C."/>
            <person name="Siden-Kiamos I."/>
            <person name="Simpson M."/>
            <person name="Skupski M.P."/>
            <person name="Smith T.J."/>
            <person name="Spier E."/>
            <person name="Spradling A.C."/>
            <person name="Stapleton M."/>
            <person name="Strong R."/>
            <person name="Sun E."/>
            <person name="Svirskas R."/>
            <person name="Tector C."/>
            <person name="Turner R."/>
            <person name="Venter E."/>
            <person name="Wang A.H."/>
            <person name="Wang X."/>
            <person name="Wang Z.-Y."/>
            <person name="Wassarman D.A."/>
            <person name="Weinstock G.M."/>
            <person name="Weissenbach J."/>
            <person name="Williams S.M."/>
            <person name="Woodage T."/>
            <person name="Worley K.C."/>
            <person name="Wu D."/>
            <person name="Yang S."/>
            <person name="Yao Q.A."/>
            <person name="Ye J."/>
            <person name="Yeh R.-F."/>
            <person name="Zaveri J.S."/>
            <person name="Zhan M."/>
            <person name="Zhang G."/>
            <person name="Zhao Q."/>
            <person name="Zheng L."/>
            <person name="Zheng X.H."/>
            <person name="Zhong F.N."/>
            <person name="Zhong W."/>
            <person name="Zhou X."/>
            <person name="Zhu S.C."/>
            <person name="Zhu X."/>
            <person name="Smith H.O."/>
            <person name="Gibbs R.A."/>
            <person name="Myers E.W."/>
            <person name="Rubin G.M."/>
            <person name="Venter J.C."/>
        </authorList>
    </citation>
    <scope>NUCLEOTIDE SEQUENCE [LARGE SCALE GENOMIC DNA]</scope>
    <source>
        <strain evidence="10">Berkeley</strain>
    </source>
</reference>
<reference evidence="10" key="2">
    <citation type="journal article" date="2002" name="Genome Biol.">
        <title>Annotation of the Drosophila melanogaster euchromatic genome: a systematic review.</title>
        <authorList>
            <person name="Misra S."/>
            <person name="Crosby M.A."/>
            <person name="Mungall C.J."/>
            <person name="Matthews B.B."/>
            <person name="Campbell K.S."/>
            <person name="Hradecky P."/>
            <person name="Huang Y."/>
            <person name="Kaminker J.S."/>
            <person name="Millburn G.H."/>
            <person name="Prochnik S.E."/>
            <person name="Smith C.D."/>
            <person name="Tupy J.L."/>
            <person name="Whitfield E.J."/>
            <person name="Bayraktaroglu L."/>
            <person name="Berman B.P."/>
            <person name="Bettencourt B.R."/>
            <person name="Celniker S.E."/>
            <person name="de Grey A.D.N.J."/>
            <person name="Drysdale R.A."/>
            <person name="Harris N.L."/>
            <person name="Richter J."/>
            <person name="Russo S."/>
            <person name="Schroeder A.J."/>
            <person name="Shu S.Q."/>
            <person name="Stapleton M."/>
            <person name="Yamada C."/>
            <person name="Ashburner M."/>
            <person name="Gelbart W.M."/>
            <person name="Rubin G.M."/>
            <person name="Lewis S.E."/>
        </authorList>
    </citation>
    <scope>GENOME REANNOTATION</scope>
    <source>
        <strain evidence="10">Berkeley</strain>
    </source>
</reference>
<reference evidence="8" key="3">
    <citation type="submission" date="2003-08" db="EMBL/GenBank/DDBJ databases">
        <authorList>
            <person name="Stapleton M."/>
            <person name="Brokstein P."/>
            <person name="Hong L."/>
            <person name="Agbayani A."/>
            <person name="Carlson J."/>
            <person name="Champe M."/>
            <person name="Chavez C."/>
            <person name="Dorsett V."/>
            <person name="Dresnek D."/>
            <person name="Farfan D."/>
            <person name="Frise E."/>
            <person name="George R."/>
            <person name="Gonzalez M."/>
            <person name="Guarin H."/>
            <person name="Kronmiller B."/>
            <person name="Li P."/>
            <person name="Liao G."/>
            <person name="Miranda A."/>
            <person name="Mungall C.J."/>
            <person name="Nunoo J."/>
            <person name="Pacleb J."/>
            <person name="Paragas V."/>
            <person name="Park S."/>
            <person name="Patel S."/>
            <person name="Phouanenavong S."/>
            <person name="Wan K."/>
            <person name="Yu C."/>
            <person name="Lewis S.E."/>
            <person name="Rubin G.M."/>
            <person name="Celniker S."/>
        </authorList>
    </citation>
    <scope>NUCLEOTIDE SEQUENCE [LARGE SCALE MRNA]</scope>
    <source>
        <strain evidence="8">Berkeley</strain>
        <tissue evidence="8">Embryo</tissue>
    </source>
</reference>
<reference evidence="7" key="4">
    <citation type="journal article" date="2008" name="Mol. Cell. Biol.">
        <title>TRF4 is involved in polyadenylation of snRNAs in Drosophila melanogaster.</title>
        <authorList>
            <person name="Nakamura R."/>
            <person name="Takeuchi R."/>
            <person name="Takata K."/>
            <person name="Shimanouchi K."/>
            <person name="Abe Y."/>
            <person name="Kanai Y."/>
            <person name="Ruike T."/>
            <person name="Ihara A."/>
            <person name="Sakaguchi K."/>
        </authorList>
    </citation>
    <scope>FUNCTION</scope>
    <scope>CATALYTIC ACTIVITY</scope>
    <scope>COFACTOR</scope>
    <scope>DEVELOPMENTAL STAGE</scope>
    <scope>DISRUPTION PHENOTYPE</scope>
    <scope>MUTAGENESIS OF 328-ASP--ASP-330</scope>
</reference>
<reference evidence="7" key="5">
    <citation type="journal article" date="2016" name="RNA">
        <title>Oligoadenylation of 3' decay intermediates promotes cytoplasmic mRNA degradation in Drosophila cells.</title>
        <authorList>
            <person name="Harnisch C."/>
            <person name="Cuzic-Feltens S."/>
            <person name="Dohm J.C."/>
            <person name="Goetze M."/>
            <person name="Himmelbauer H."/>
            <person name="Wahle E."/>
        </authorList>
    </citation>
    <scope>FUNCTION</scope>
    <scope>SUBCELLULAR LOCATION</scope>
</reference>
<organism evidence="10">
    <name type="scientific">Drosophila melanogaster</name>
    <name type="common">Fruit fly</name>
    <dbReference type="NCBI Taxonomy" id="7227"/>
    <lineage>
        <taxon>Eukaryota</taxon>
        <taxon>Metazoa</taxon>
        <taxon>Ecdysozoa</taxon>
        <taxon>Arthropoda</taxon>
        <taxon>Hexapoda</taxon>
        <taxon>Insecta</taxon>
        <taxon>Pterygota</taxon>
        <taxon>Neoptera</taxon>
        <taxon>Endopterygota</taxon>
        <taxon>Diptera</taxon>
        <taxon>Brachycera</taxon>
        <taxon>Muscomorpha</taxon>
        <taxon>Ephydroidea</taxon>
        <taxon>Drosophilidae</taxon>
        <taxon>Drosophila</taxon>
        <taxon>Sophophora</taxon>
    </lineage>
</organism>
<accession>Q7KVS9</accession>
<accession>A8JV36</accession>
<keyword id="KW-0024">Alternative initiation</keyword>
<keyword id="KW-0963">Cytoplasm</keyword>
<keyword id="KW-0413">Isomerase</keyword>
<keyword id="KW-0460">Magnesium</keyword>
<keyword id="KW-0464">Manganese</keyword>
<keyword id="KW-0479">Metal-binding</keyword>
<keyword id="KW-0507">mRNA processing</keyword>
<keyword id="KW-0548">Nucleotidyltransferase</keyword>
<keyword id="KW-1185">Reference proteome</keyword>
<keyword id="KW-0808">Transferase</keyword>
<proteinExistence type="evidence at protein level"/>